<feature type="chain" id="PRO_0000272040" description="Fe(3+) ions import ATP-binding protein FbpC">
    <location>
        <begin position="1"/>
        <end position="352"/>
    </location>
</feature>
<feature type="domain" description="ABC transporter" evidence="1">
    <location>
        <begin position="5"/>
        <end position="239"/>
    </location>
</feature>
<feature type="binding site" evidence="1">
    <location>
        <begin position="37"/>
        <end position="44"/>
    </location>
    <ligand>
        <name>ATP</name>
        <dbReference type="ChEBI" id="CHEBI:30616"/>
    </ligand>
</feature>
<feature type="strand" evidence="2">
    <location>
        <begin position="5"/>
        <end position="14"/>
    </location>
</feature>
<feature type="strand" evidence="2">
    <location>
        <begin position="17"/>
        <end position="27"/>
    </location>
</feature>
<feature type="strand" evidence="2">
    <location>
        <begin position="32"/>
        <end position="38"/>
    </location>
</feature>
<feature type="helix" evidence="2">
    <location>
        <begin position="43"/>
        <end position="50"/>
    </location>
</feature>
<feature type="strand" evidence="2">
    <location>
        <begin position="57"/>
        <end position="63"/>
    </location>
</feature>
<feature type="strand" evidence="2">
    <location>
        <begin position="66"/>
        <end position="72"/>
    </location>
</feature>
<feature type="helix" evidence="2">
    <location>
        <begin position="77"/>
        <end position="79"/>
    </location>
</feature>
<feature type="strand" evidence="2">
    <location>
        <begin position="83"/>
        <end position="85"/>
    </location>
</feature>
<feature type="helix" evidence="2">
    <location>
        <begin position="97"/>
        <end position="102"/>
    </location>
</feature>
<feature type="helix" evidence="2">
    <location>
        <begin position="113"/>
        <end position="125"/>
    </location>
</feature>
<feature type="helix" evidence="2">
    <location>
        <begin position="129"/>
        <end position="131"/>
    </location>
</feature>
<feature type="helix" evidence="2">
    <location>
        <begin position="136"/>
        <end position="138"/>
    </location>
</feature>
<feature type="helix" evidence="2">
    <location>
        <begin position="141"/>
        <end position="153"/>
    </location>
</feature>
<feature type="strand" evidence="2">
    <location>
        <begin position="158"/>
        <end position="164"/>
    </location>
</feature>
<feature type="turn" evidence="2">
    <location>
        <begin position="165"/>
        <end position="168"/>
    </location>
</feature>
<feature type="helix" evidence="2">
    <location>
        <begin position="171"/>
        <end position="187"/>
    </location>
</feature>
<feature type="strand" evidence="2">
    <location>
        <begin position="191"/>
        <end position="195"/>
    </location>
</feature>
<feature type="helix" evidence="2">
    <location>
        <begin position="199"/>
        <end position="205"/>
    </location>
</feature>
<feature type="strand" evidence="2">
    <location>
        <begin position="207"/>
        <end position="213"/>
    </location>
</feature>
<feature type="strand" evidence="2">
    <location>
        <begin position="216"/>
        <end position="221"/>
    </location>
</feature>
<feature type="helix" evidence="2">
    <location>
        <begin position="223"/>
        <end position="228"/>
    </location>
</feature>
<feature type="helix" evidence="2">
    <location>
        <begin position="233"/>
        <end position="239"/>
    </location>
</feature>
<feature type="strand" evidence="2">
    <location>
        <begin position="243"/>
        <end position="249"/>
    </location>
</feature>
<feature type="strand" evidence="2">
    <location>
        <begin position="251"/>
        <end position="257"/>
    </location>
</feature>
<feature type="strand" evidence="2">
    <location>
        <begin position="260"/>
        <end position="265"/>
    </location>
</feature>
<feature type="strand" evidence="2">
    <location>
        <begin position="273"/>
        <end position="278"/>
    </location>
</feature>
<feature type="helix" evidence="2">
    <location>
        <begin position="280"/>
        <end position="282"/>
    </location>
</feature>
<feature type="strand" evidence="2">
    <location>
        <begin position="283"/>
        <end position="287"/>
    </location>
</feature>
<feature type="strand" evidence="2">
    <location>
        <begin position="292"/>
        <end position="304"/>
    </location>
</feature>
<feature type="strand" evidence="2">
    <location>
        <begin position="306"/>
        <end position="315"/>
    </location>
</feature>
<feature type="strand" evidence="2">
    <location>
        <begin position="318"/>
        <end position="326"/>
    </location>
</feature>
<feature type="strand" evidence="2">
    <location>
        <begin position="335"/>
        <end position="340"/>
    </location>
</feature>
<feature type="strand" evidence="2">
    <location>
        <begin position="344"/>
        <end position="348"/>
    </location>
</feature>
<sequence length="352" mass="37902">MTAALHIGHLSKSFQNTPVLNDISLSLDPGEILFIIGASGCGKTTLLRCLAGFEQPDSGEISLSGKTIFSKNTNLPVRERRLGYLVQEGVLFPHLTVYRNIAYGLGNGKGRTAQERQRIEAMLELTGISELAGRYPHELSGGQQQRVALARALAPDPELILLDEPFSALDEQLRRQIREDMIAALRANGKSAVFVSHDREEALQYADRIAVMKQGRILQTASPHELYRQPADLDAALFIGEGIVFPAALNADGTADCRLGRLPVQSGAPAGTRGTLLIRPEQFSLHPHSAPAASIHAVVLKTTPKARHTEISLRAGQTVLTLNLPSAPTLSDGISAVLHLDGPALFFPGNTL</sequence>
<reference key="1">
    <citation type="submission" date="2003-03" db="EMBL/GenBank/DDBJ databases">
        <title>The complete genome sequence of Neisseria gonorrhoeae.</title>
        <authorList>
            <person name="Lewis L.A."/>
            <person name="Gillaspy A.F."/>
            <person name="McLaughlin R.E."/>
            <person name="Gipson M."/>
            <person name="Ducey T.F."/>
            <person name="Ownbey T."/>
            <person name="Hartman K."/>
            <person name="Nydick C."/>
            <person name="Carson M.B."/>
            <person name="Vaughn J."/>
            <person name="Thomson C."/>
            <person name="Song L."/>
            <person name="Lin S."/>
            <person name="Yuan X."/>
            <person name="Najar F."/>
            <person name="Zhan M."/>
            <person name="Ren Q."/>
            <person name="Zhu H."/>
            <person name="Qi S."/>
            <person name="Kenton S.M."/>
            <person name="Lai H."/>
            <person name="White J.D."/>
            <person name="Clifton S."/>
            <person name="Roe B.A."/>
            <person name="Dyer D.W."/>
        </authorList>
    </citation>
    <scope>NUCLEOTIDE SEQUENCE [LARGE SCALE GENOMIC DNA]</scope>
    <source>
        <strain>ATCC 700825 / FA 1090</strain>
    </source>
</reference>
<keyword id="KW-0002">3D-structure</keyword>
<keyword id="KW-0067">ATP-binding</keyword>
<keyword id="KW-0997">Cell inner membrane</keyword>
<keyword id="KW-1003">Cell membrane</keyword>
<keyword id="KW-0406">Ion transport</keyword>
<keyword id="KW-0408">Iron</keyword>
<keyword id="KW-0410">Iron transport</keyword>
<keyword id="KW-0472">Membrane</keyword>
<keyword id="KW-0547">Nucleotide-binding</keyword>
<keyword id="KW-1185">Reference proteome</keyword>
<keyword id="KW-1278">Translocase</keyword>
<keyword id="KW-0813">Transport</keyword>
<protein>
    <recommendedName>
        <fullName evidence="1">Fe(3+) ions import ATP-binding protein FbpC</fullName>
        <ecNumber evidence="1">7.2.2.7</ecNumber>
    </recommendedName>
</protein>
<accession>Q5FA19</accession>
<proteinExistence type="evidence at protein level"/>
<name>FBPC_NEIG1</name>
<dbReference type="EC" id="7.2.2.7" evidence="1"/>
<dbReference type="EMBL" id="AE004969">
    <property type="protein sequence ID" value="AAW88968.1"/>
    <property type="molecule type" value="Genomic_DNA"/>
</dbReference>
<dbReference type="RefSeq" id="WP_003687540.1">
    <property type="nucleotide sequence ID" value="NC_002946.2"/>
</dbReference>
<dbReference type="RefSeq" id="YP_207380.1">
    <property type="nucleotide sequence ID" value="NC_002946.2"/>
</dbReference>
<dbReference type="PDB" id="3FVQ">
    <property type="method" value="X-ray"/>
    <property type="resolution" value="1.90 A"/>
    <property type="chains" value="A/B=1-352"/>
</dbReference>
<dbReference type="PDBsum" id="3FVQ"/>
<dbReference type="SMR" id="Q5FA19"/>
<dbReference type="STRING" id="242231.NGO_0215"/>
<dbReference type="GeneID" id="66752546"/>
<dbReference type="KEGG" id="ngo:NGO_0215"/>
<dbReference type="PATRIC" id="fig|242231.10.peg.267"/>
<dbReference type="HOGENOM" id="CLU_000604_1_1_4"/>
<dbReference type="EvolutionaryTrace" id="Q5FA19"/>
<dbReference type="Proteomes" id="UP000000535">
    <property type="component" value="Chromosome"/>
</dbReference>
<dbReference type="GO" id="GO:0005886">
    <property type="term" value="C:plasma membrane"/>
    <property type="evidence" value="ECO:0007669"/>
    <property type="project" value="UniProtKB-SubCell"/>
</dbReference>
<dbReference type="GO" id="GO:0015408">
    <property type="term" value="F:ABC-type ferric iron transporter activity"/>
    <property type="evidence" value="ECO:0007669"/>
    <property type="project" value="UniProtKB-EC"/>
</dbReference>
<dbReference type="GO" id="GO:0005524">
    <property type="term" value="F:ATP binding"/>
    <property type="evidence" value="ECO:0007669"/>
    <property type="project" value="UniProtKB-KW"/>
</dbReference>
<dbReference type="GO" id="GO:0016887">
    <property type="term" value="F:ATP hydrolysis activity"/>
    <property type="evidence" value="ECO:0007669"/>
    <property type="project" value="InterPro"/>
</dbReference>
<dbReference type="CDD" id="cd03259">
    <property type="entry name" value="ABC_Carb_Solutes_like"/>
    <property type="match status" value="1"/>
</dbReference>
<dbReference type="FunFam" id="3.40.50.300:FF:000425">
    <property type="entry name" value="Probable ABC transporter, ATP-binding subunit"/>
    <property type="match status" value="1"/>
</dbReference>
<dbReference type="Gene3D" id="2.40.50.450">
    <property type="match status" value="1"/>
</dbReference>
<dbReference type="Gene3D" id="2.40.50.470">
    <property type="match status" value="1"/>
</dbReference>
<dbReference type="Gene3D" id="3.40.50.300">
    <property type="entry name" value="P-loop containing nucleotide triphosphate hydrolases"/>
    <property type="match status" value="1"/>
</dbReference>
<dbReference type="InterPro" id="IPR003593">
    <property type="entry name" value="AAA+_ATPase"/>
</dbReference>
<dbReference type="InterPro" id="IPR050093">
    <property type="entry name" value="ABC_SmlMolc_Importer"/>
</dbReference>
<dbReference type="InterPro" id="IPR003439">
    <property type="entry name" value="ABC_transporter-like_ATP-bd"/>
</dbReference>
<dbReference type="InterPro" id="IPR017871">
    <property type="entry name" value="ABC_transporter-like_CS"/>
</dbReference>
<dbReference type="InterPro" id="IPR015853">
    <property type="entry name" value="ABC_transpr_FbpC"/>
</dbReference>
<dbReference type="InterPro" id="IPR041230">
    <property type="entry name" value="FbpC_C"/>
</dbReference>
<dbReference type="InterPro" id="IPR055223">
    <property type="entry name" value="FbpC_RD"/>
</dbReference>
<dbReference type="InterPro" id="IPR027417">
    <property type="entry name" value="P-loop_NTPase"/>
</dbReference>
<dbReference type="PANTHER" id="PTHR42781:SF5">
    <property type="entry name" value="PUTRESCINE TRANSPORT ATP-BINDING PROTEIN POTG"/>
    <property type="match status" value="1"/>
</dbReference>
<dbReference type="PANTHER" id="PTHR42781">
    <property type="entry name" value="SPERMIDINE/PUTRESCINE IMPORT ATP-BINDING PROTEIN POTA"/>
    <property type="match status" value="1"/>
</dbReference>
<dbReference type="Pfam" id="PF00005">
    <property type="entry name" value="ABC_tran"/>
    <property type="match status" value="1"/>
</dbReference>
<dbReference type="Pfam" id="PF22443">
    <property type="entry name" value="FbpC-like_RD"/>
    <property type="match status" value="1"/>
</dbReference>
<dbReference type="Pfam" id="PF17845">
    <property type="entry name" value="FbpC_C_terminal"/>
    <property type="match status" value="1"/>
</dbReference>
<dbReference type="SMART" id="SM00382">
    <property type="entry name" value="AAA"/>
    <property type="match status" value="1"/>
</dbReference>
<dbReference type="SUPFAM" id="SSF52540">
    <property type="entry name" value="P-loop containing nucleoside triphosphate hydrolases"/>
    <property type="match status" value="1"/>
</dbReference>
<dbReference type="PROSITE" id="PS00211">
    <property type="entry name" value="ABC_TRANSPORTER_1"/>
    <property type="match status" value="1"/>
</dbReference>
<dbReference type="PROSITE" id="PS50893">
    <property type="entry name" value="ABC_TRANSPORTER_2"/>
    <property type="match status" value="1"/>
</dbReference>
<dbReference type="PROSITE" id="PS51242">
    <property type="entry name" value="FBPC"/>
    <property type="match status" value="1"/>
</dbReference>
<comment type="function">
    <text evidence="1">Part of the ABC transporter complex FbpABC involved in Fe(3+) ions import. Responsible for energy coupling to the transport system.</text>
</comment>
<comment type="catalytic activity">
    <reaction evidence="1">
        <text>Fe(3+)(out) + ATP + H2O = Fe(3+)(in) + ADP + phosphate + H(+)</text>
        <dbReference type="Rhea" id="RHEA:12332"/>
        <dbReference type="ChEBI" id="CHEBI:15377"/>
        <dbReference type="ChEBI" id="CHEBI:15378"/>
        <dbReference type="ChEBI" id="CHEBI:29034"/>
        <dbReference type="ChEBI" id="CHEBI:30616"/>
        <dbReference type="ChEBI" id="CHEBI:43474"/>
        <dbReference type="ChEBI" id="CHEBI:456216"/>
        <dbReference type="EC" id="7.2.2.7"/>
    </reaction>
</comment>
<comment type="subunit">
    <text evidence="1">The complex is composed of two ATP-binding proteins (FbpC), two transmembrane proteins (FbpB) and a solute-binding protein (FbpA).</text>
</comment>
<comment type="subcellular location">
    <subcellularLocation>
        <location evidence="1">Cell inner membrane</location>
        <topology evidence="1">Peripheral membrane protein</topology>
    </subcellularLocation>
</comment>
<comment type="similarity">
    <text evidence="1">Belongs to the ABC transporter superfamily. Fe(3+) ion importer (TC 3.A.1.10) family.</text>
</comment>
<gene>
    <name evidence="1" type="primary">fbpC</name>
    <name type="ordered locus">NGO_0215</name>
</gene>
<organism>
    <name type="scientific">Neisseria gonorrhoeae (strain ATCC 700825 / FA 1090)</name>
    <dbReference type="NCBI Taxonomy" id="242231"/>
    <lineage>
        <taxon>Bacteria</taxon>
        <taxon>Pseudomonadati</taxon>
        <taxon>Pseudomonadota</taxon>
        <taxon>Betaproteobacteria</taxon>
        <taxon>Neisseriales</taxon>
        <taxon>Neisseriaceae</taxon>
        <taxon>Neisseria</taxon>
    </lineage>
</organism>
<evidence type="ECO:0000255" key="1">
    <source>
        <dbReference type="HAMAP-Rule" id="MF_01706"/>
    </source>
</evidence>
<evidence type="ECO:0007829" key="2">
    <source>
        <dbReference type="PDB" id="3FVQ"/>
    </source>
</evidence>